<organism>
    <name type="scientific">Synechococcus sp. (strain JA-2-3B'a(2-13))</name>
    <name type="common">Cyanobacteria bacterium Yellowstone B-Prime</name>
    <dbReference type="NCBI Taxonomy" id="321332"/>
    <lineage>
        <taxon>Bacteria</taxon>
        <taxon>Bacillati</taxon>
        <taxon>Cyanobacteriota</taxon>
        <taxon>Cyanophyceae</taxon>
        <taxon>Synechococcales</taxon>
        <taxon>Synechococcaceae</taxon>
        <taxon>Synechococcus</taxon>
    </lineage>
</organism>
<name>SYP_SYNJB</name>
<dbReference type="EC" id="6.1.1.15" evidence="1"/>
<dbReference type="EMBL" id="CP000240">
    <property type="protein sequence ID" value="ABD02103.1"/>
    <property type="molecule type" value="Genomic_DNA"/>
</dbReference>
<dbReference type="RefSeq" id="WP_011432756.1">
    <property type="nucleotide sequence ID" value="NC_007776.1"/>
</dbReference>
<dbReference type="SMR" id="Q2JMD8"/>
<dbReference type="STRING" id="321332.CYB_1126"/>
<dbReference type="KEGG" id="cyb:CYB_1126"/>
<dbReference type="eggNOG" id="COG0442">
    <property type="taxonomic scope" value="Bacteria"/>
</dbReference>
<dbReference type="HOGENOM" id="CLU_016739_0_0_3"/>
<dbReference type="OrthoDB" id="9809052at2"/>
<dbReference type="Proteomes" id="UP000001938">
    <property type="component" value="Chromosome"/>
</dbReference>
<dbReference type="GO" id="GO:0005829">
    <property type="term" value="C:cytosol"/>
    <property type="evidence" value="ECO:0007669"/>
    <property type="project" value="TreeGrafter"/>
</dbReference>
<dbReference type="GO" id="GO:0002161">
    <property type="term" value="F:aminoacyl-tRNA deacylase activity"/>
    <property type="evidence" value="ECO:0007669"/>
    <property type="project" value="InterPro"/>
</dbReference>
<dbReference type="GO" id="GO:0005524">
    <property type="term" value="F:ATP binding"/>
    <property type="evidence" value="ECO:0007669"/>
    <property type="project" value="UniProtKB-UniRule"/>
</dbReference>
<dbReference type="GO" id="GO:0004827">
    <property type="term" value="F:proline-tRNA ligase activity"/>
    <property type="evidence" value="ECO:0007669"/>
    <property type="project" value="UniProtKB-UniRule"/>
</dbReference>
<dbReference type="GO" id="GO:0006433">
    <property type="term" value="P:prolyl-tRNA aminoacylation"/>
    <property type="evidence" value="ECO:0007669"/>
    <property type="project" value="UniProtKB-UniRule"/>
</dbReference>
<dbReference type="CDD" id="cd04334">
    <property type="entry name" value="ProRS-INS"/>
    <property type="match status" value="1"/>
</dbReference>
<dbReference type="CDD" id="cd00861">
    <property type="entry name" value="ProRS_anticodon_short"/>
    <property type="match status" value="1"/>
</dbReference>
<dbReference type="CDD" id="cd00779">
    <property type="entry name" value="ProRS_core_prok"/>
    <property type="match status" value="1"/>
</dbReference>
<dbReference type="FunFam" id="3.40.50.800:FF:000011">
    <property type="entry name" value="Proline--tRNA ligase"/>
    <property type="match status" value="1"/>
</dbReference>
<dbReference type="Gene3D" id="3.40.50.800">
    <property type="entry name" value="Anticodon-binding domain"/>
    <property type="match status" value="1"/>
</dbReference>
<dbReference type="Gene3D" id="3.30.930.10">
    <property type="entry name" value="Bira Bifunctional Protein, Domain 2"/>
    <property type="match status" value="2"/>
</dbReference>
<dbReference type="HAMAP" id="MF_01569">
    <property type="entry name" value="Pro_tRNA_synth_type1"/>
    <property type="match status" value="1"/>
</dbReference>
<dbReference type="InterPro" id="IPR002314">
    <property type="entry name" value="aa-tRNA-synt_IIb"/>
</dbReference>
<dbReference type="InterPro" id="IPR006195">
    <property type="entry name" value="aa-tRNA-synth_II"/>
</dbReference>
<dbReference type="InterPro" id="IPR045864">
    <property type="entry name" value="aa-tRNA-synth_II/BPL/LPL"/>
</dbReference>
<dbReference type="InterPro" id="IPR004154">
    <property type="entry name" value="Anticodon-bd"/>
</dbReference>
<dbReference type="InterPro" id="IPR036621">
    <property type="entry name" value="Anticodon-bd_dom_sf"/>
</dbReference>
<dbReference type="InterPro" id="IPR002316">
    <property type="entry name" value="Pro-tRNA-ligase_IIa"/>
</dbReference>
<dbReference type="InterPro" id="IPR004500">
    <property type="entry name" value="Pro-tRNA-synth_IIa_bac-type"/>
</dbReference>
<dbReference type="InterPro" id="IPR023717">
    <property type="entry name" value="Pro-tRNA-Synthase_IIa_type1"/>
</dbReference>
<dbReference type="InterPro" id="IPR050062">
    <property type="entry name" value="Pro-tRNA_synthetase"/>
</dbReference>
<dbReference type="InterPro" id="IPR044140">
    <property type="entry name" value="ProRS_anticodon_short"/>
</dbReference>
<dbReference type="InterPro" id="IPR033730">
    <property type="entry name" value="ProRS_core_prok"/>
</dbReference>
<dbReference type="InterPro" id="IPR036754">
    <property type="entry name" value="YbaK/aa-tRNA-synt-asso_dom_sf"/>
</dbReference>
<dbReference type="InterPro" id="IPR007214">
    <property type="entry name" value="YbaK/aa-tRNA-synth-assoc-dom"/>
</dbReference>
<dbReference type="NCBIfam" id="NF006625">
    <property type="entry name" value="PRK09194.1"/>
    <property type="match status" value="1"/>
</dbReference>
<dbReference type="NCBIfam" id="TIGR00409">
    <property type="entry name" value="proS_fam_II"/>
    <property type="match status" value="1"/>
</dbReference>
<dbReference type="PANTHER" id="PTHR42753">
    <property type="entry name" value="MITOCHONDRIAL RIBOSOME PROTEIN L39/PROLYL-TRNA LIGASE FAMILY MEMBER"/>
    <property type="match status" value="1"/>
</dbReference>
<dbReference type="PANTHER" id="PTHR42753:SF2">
    <property type="entry name" value="PROLINE--TRNA LIGASE"/>
    <property type="match status" value="1"/>
</dbReference>
<dbReference type="Pfam" id="PF03129">
    <property type="entry name" value="HGTP_anticodon"/>
    <property type="match status" value="1"/>
</dbReference>
<dbReference type="Pfam" id="PF00587">
    <property type="entry name" value="tRNA-synt_2b"/>
    <property type="match status" value="1"/>
</dbReference>
<dbReference type="Pfam" id="PF04073">
    <property type="entry name" value="tRNA_edit"/>
    <property type="match status" value="1"/>
</dbReference>
<dbReference type="PRINTS" id="PR01046">
    <property type="entry name" value="TRNASYNTHPRO"/>
</dbReference>
<dbReference type="SUPFAM" id="SSF52954">
    <property type="entry name" value="Class II aaRS ABD-related"/>
    <property type="match status" value="1"/>
</dbReference>
<dbReference type="SUPFAM" id="SSF55681">
    <property type="entry name" value="Class II aaRS and biotin synthetases"/>
    <property type="match status" value="1"/>
</dbReference>
<dbReference type="SUPFAM" id="SSF55826">
    <property type="entry name" value="YbaK/ProRS associated domain"/>
    <property type="match status" value="1"/>
</dbReference>
<dbReference type="PROSITE" id="PS50862">
    <property type="entry name" value="AA_TRNA_LIGASE_II"/>
    <property type="match status" value="1"/>
</dbReference>
<feature type="chain" id="PRO_0000248795" description="Proline--tRNA ligase">
    <location>
        <begin position="1"/>
        <end position="609"/>
    </location>
</feature>
<proteinExistence type="inferred from homology"/>
<keyword id="KW-0030">Aminoacyl-tRNA synthetase</keyword>
<keyword id="KW-0067">ATP-binding</keyword>
<keyword id="KW-0963">Cytoplasm</keyword>
<keyword id="KW-0436">Ligase</keyword>
<keyword id="KW-0547">Nucleotide-binding</keyword>
<keyword id="KW-0648">Protein biosynthesis</keyword>
<keyword id="KW-1185">Reference proteome</keyword>
<comment type="function">
    <text evidence="1">Catalyzes the attachment of proline to tRNA(Pro) in a two-step reaction: proline is first activated by ATP to form Pro-AMP and then transferred to the acceptor end of tRNA(Pro). As ProRS can inadvertently accommodate and process non-cognate amino acids such as alanine and cysteine, to avoid such errors it has two additional distinct editing activities against alanine. One activity is designated as 'pretransfer' editing and involves the tRNA(Pro)-independent hydrolysis of activated Ala-AMP. The other activity is designated 'posttransfer' editing and involves deacylation of mischarged Ala-tRNA(Pro). The misacylated Cys-tRNA(Pro) is not edited by ProRS.</text>
</comment>
<comment type="catalytic activity">
    <reaction evidence="1">
        <text>tRNA(Pro) + L-proline + ATP = L-prolyl-tRNA(Pro) + AMP + diphosphate</text>
        <dbReference type="Rhea" id="RHEA:14305"/>
        <dbReference type="Rhea" id="RHEA-COMP:9700"/>
        <dbReference type="Rhea" id="RHEA-COMP:9702"/>
        <dbReference type="ChEBI" id="CHEBI:30616"/>
        <dbReference type="ChEBI" id="CHEBI:33019"/>
        <dbReference type="ChEBI" id="CHEBI:60039"/>
        <dbReference type="ChEBI" id="CHEBI:78442"/>
        <dbReference type="ChEBI" id="CHEBI:78532"/>
        <dbReference type="ChEBI" id="CHEBI:456215"/>
        <dbReference type="EC" id="6.1.1.15"/>
    </reaction>
</comment>
<comment type="subunit">
    <text evidence="1">Homodimer.</text>
</comment>
<comment type="subcellular location">
    <subcellularLocation>
        <location evidence="1">Cytoplasm</location>
    </subcellularLocation>
</comment>
<comment type="domain">
    <text evidence="1">Consists of three domains: the N-terminal catalytic domain, the editing domain and the C-terminal anticodon-binding domain.</text>
</comment>
<comment type="similarity">
    <text evidence="1">Belongs to the class-II aminoacyl-tRNA synthetase family. ProS type 1 subfamily.</text>
</comment>
<reference key="1">
    <citation type="journal article" date="2007" name="ISME J.">
        <title>Population level functional diversity in a microbial community revealed by comparative genomic and metagenomic analyses.</title>
        <authorList>
            <person name="Bhaya D."/>
            <person name="Grossman A.R."/>
            <person name="Steunou A.-S."/>
            <person name="Khuri N."/>
            <person name="Cohan F.M."/>
            <person name="Hamamura N."/>
            <person name="Melendrez M.C."/>
            <person name="Bateson M.M."/>
            <person name="Ward D.M."/>
            <person name="Heidelberg J.F."/>
        </authorList>
    </citation>
    <scope>NUCLEOTIDE SEQUENCE [LARGE SCALE GENOMIC DNA]</scope>
    <source>
        <strain>JA-2-3B'a(2-13)</strain>
    </source>
</reference>
<evidence type="ECO:0000255" key="1">
    <source>
        <dbReference type="HAMAP-Rule" id="MF_01569"/>
    </source>
</evidence>
<accession>Q2JMD8</accession>
<gene>
    <name evidence="1" type="primary">proS</name>
    <name type="ordered locus">CYB_1126</name>
</gene>
<protein>
    <recommendedName>
        <fullName evidence="1">Proline--tRNA ligase</fullName>
        <ecNumber evidence="1">6.1.1.15</ecNumber>
    </recommendedName>
    <alternativeName>
        <fullName evidence="1">Prolyl-tRNA synthetase</fullName>
        <shortName evidence="1">ProRS</shortName>
    </alternativeName>
</protein>
<sequence length="609" mass="67906">MQQSQRLSQMLFVTLREDPVEAELPSHKLLLRGCFIRRLSPGIYTYLPLLWRVLQKISEIVRQEMNAIGGQECLLPQLQPAEIWRESGRWDVYTQAEGIMFALKDRQGREQSLGPTHEEVITLLARDLIRSYRQLPQTLYQIQTKFRDEIRPRFGLMRGREFIMKDAYSFHANEESLRQTYQDMYRAYSRILRRCGLEFRVVDADAGAIGGPSAASQEFMVLASAGEDEILYTPDGSYAANVEKAVSIPPPAAESPYTAFQVLDTPGTETIEKLAAFLKISSTLIVKNVLYQALYDNGLRVAVLLSIRGDQEVNEVKLANHLSRLAERYQASKLLKLALADAEIQNSWQGDPIPVGYIAPDLPDSCLGRQKNLAPQILRLADQTAALLQNFVTGGNQVGQHVVGANWGEQYPLPEVVDVRKAQAGDRCLLNPDQILETARGIEIGHIFQLGLKFSLPMRATFTDEQGSEQPLWMGCYGIGVSRLAQAAVEQSHDANGIIWPVAIAPYHVVVVVPNISDPEQMSVAEKLVQDLATAGIETLWDDRDERAGVKFKDADLIGIPYRITTGRSLKQGKVELTERASGQATEIPIEEVVTTLKERIEAALAVPD</sequence>